<keyword id="KW-0050">Antiport</keyword>
<keyword id="KW-0997">Cell inner membrane</keyword>
<keyword id="KW-1003">Cell membrane</keyword>
<keyword id="KW-0406">Ion transport</keyword>
<keyword id="KW-0472">Membrane</keyword>
<keyword id="KW-1185">Reference proteome</keyword>
<keyword id="KW-0915">Sodium</keyword>
<keyword id="KW-0739">Sodium transport</keyword>
<keyword id="KW-0812">Transmembrane</keyword>
<keyword id="KW-1133">Transmembrane helix</keyword>
<keyword id="KW-0813">Transport</keyword>
<organism>
    <name type="scientific">Photorhabdus laumondii subsp. laumondii (strain DSM 15139 / CIP 105565 / TT01)</name>
    <name type="common">Photorhabdus luminescens subsp. laumondii</name>
    <dbReference type="NCBI Taxonomy" id="243265"/>
    <lineage>
        <taxon>Bacteria</taxon>
        <taxon>Pseudomonadati</taxon>
        <taxon>Pseudomonadota</taxon>
        <taxon>Gammaproteobacteria</taxon>
        <taxon>Enterobacterales</taxon>
        <taxon>Morganellaceae</taxon>
        <taxon>Photorhabdus</taxon>
    </lineage>
</organism>
<name>MDTK_PHOLL</name>
<evidence type="ECO:0000255" key="1">
    <source>
        <dbReference type="HAMAP-Rule" id="MF_00400"/>
    </source>
</evidence>
<feature type="chain" id="PRO_0000164186" description="Multidrug resistance protein MdtK">
    <location>
        <begin position="1"/>
        <end position="457"/>
    </location>
</feature>
<feature type="transmembrane region" description="Helical" evidence="1">
    <location>
        <begin position="11"/>
        <end position="31"/>
    </location>
</feature>
<feature type="transmembrane region" description="Helical" evidence="1">
    <location>
        <begin position="53"/>
        <end position="73"/>
    </location>
</feature>
<feature type="transmembrane region" description="Helical" evidence="1">
    <location>
        <begin position="93"/>
        <end position="113"/>
    </location>
</feature>
<feature type="transmembrane region" description="Helical" evidence="1">
    <location>
        <begin position="127"/>
        <end position="147"/>
    </location>
</feature>
<feature type="transmembrane region" description="Helical" evidence="1">
    <location>
        <begin position="160"/>
        <end position="180"/>
    </location>
</feature>
<feature type="transmembrane region" description="Helical" evidence="1">
    <location>
        <begin position="188"/>
        <end position="208"/>
    </location>
</feature>
<feature type="transmembrane region" description="Helical" evidence="1">
    <location>
        <begin position="243"/>
        <end position="263"/>
    </location>
</feature>
<feature type="transmembrane region" description="Helical" evidence="1">
    <location>
        <begin position="280"/>
        <end position="300"/>
    </location>
</feature>
<feature type="transmembrane region" description="Helical" evidence="1">
    <location>
        <begin position="316"/>
        <end position="336"/>
    </location>
</feature>
<feature type="transmembrane region" description="Helical" evidence="1">
    <location>
        <begin position="357"/>
        <end position="377"/>
    </location>
</feature>
<feature type="transmembrane region" description="Helical" evidence="1">
    <location>
        <begin position="387"/>
        <end position="407"/>
    </location>
</feature>
<feature type="transmembrane region" description="Helical" evidence="1">
    <location>
        <begin position="418"/>
        <end position="438"/>
    </location>
</feature>
<dbReference type="EMBL" id="BX571867">
    <property type="protein sequence ID" value="CAE14985.1"/>
    <property type="molecule type" value="Genomic_DNA"/>
</dbReference>
<dbReference type="RefSeq" id="WP_011146833.1">
    <property type="nucleotide sequence ID" value="NC_005126.1"/>
</dbReference>
<dbReference type="SMR" id="Q7N3V2"/>
<dbReference type="STRING" id="243265.plu2611"/>
<dbReference type="GeneID" id="48848870"/>
<dbReference type="KEGG" id="plu:plu2611"/>
<dbReference type="eggNOG" id="COG0534">
    <property type="taxonomic scope" value="Bacteria"/>
</dbReference>
<dbReference type="HOGENOM" id="CLU_012893_6_0_6"/>
<dbReference type="OrthoDB" id="9780160at2"/>
<dbReference type="Proteomes" id="UP000002514">
    <property type="component" value="Chromosome"/>
</dbReference>
<dbReference type="GO" id="GO:0005886">
    <property type="term" value="C:plasma membrane"/>
    <property type="evidence" value="ECO:0007669"/>
    <property type="project" value="UniProtKB-SubCell"/>
</dbReference>
<dbReference type="GO" id="GO:0015297">
    <property type="term" value="F:antiporter activity"/>
    <property type="evidence" value="ECO:0007669"/>
    <property type="project" value="UniProtKB-UniRule"/>
</dbReference>
<dbReference type="GO" id="GO:0042910">
    <property type="term" value="F:xenobiotic transmembrane transporter activity"/>
    <property type="evidence" value="ECO:0007669"/>
    <property type="project" value="UniProtKB-UniRule"/>
</dbReference>
<dbReference type="GO" id="GO:0006814">
    <property type="term" value="P:sodium ion transport"/>
    <property type="evidence" value="ECO:0007669"/>
    <property type="project" value="UniProtKB-UniRule"/>
</dbReference>
<dbReference type="GO" id="GO:0006855">
    <property type="term" value="P:xenobiotic transmembrane transport"/>
    <property type="evidence" value="ECO:0007669"/>
    <property type="project" value="UniProtKB-UniRule"/>
</dbReference>
<dbReference type="CDD" id="cd13131">
    <property type="entry name" value="MATE_NorM_like"/>
    <property type="match status" value="1"/>
</dbReference>
<dbReference type="HAMAP" id="MF_00400">
    <property type="entry name" value="MdtK"/>
    <property type="match status" value="1"/>
</dbReference>
<dbReference type="InterPro" id="IPR002528">
    <property type="entry name" value="MATE_fam"/>
</dbReference>
<dbReference type="InterPro" id="IPR050222">
    <property type="entry name" value="MATE_MdtK"/>
</dbReference>
<dbReference type="InterPro" id="IPR048279">
    <property type="entry name" value="MdtK-like"/>
</dbReference>
<dbReference type="InterPro" id="IPR022913">
    <property type="entry name" value="Multidrug-R_MdtK"/>
</dbReference>
<dbReference type="NCBIfam" id="TIGR00797">
    <property type="entry name" value="matE"/>
    <property type="match status" value="1"/>
</dbReference>
<dbReference type="PANTHER" id="PTHR43298:SF2">
    <property type="entry name" value="FMN_FAD EXPORTER YEEO-RELATED"/>
    <property type="match status" value="1"/>
</dbReference>
<dbReference type="PANTHER" id="PTHR43298">
    <property type="entry name" value="MULTIDRUG RESISTANCE PROTEIN NORM-RELATED"/>
    <property type="match status" value="1"/>
</dbReference>
<dbReference type="Pfam" id="PF01554">
    <property type="entry name" value="MatE"/>
    <property type="match status" value="2"/>
</dbReference>
<dbReference type="PIRSF" id="PIRSF006603">
    <property type="entry name" value="DinF"/>
    <property type="match status" value="1"/>
</dbReference>
<protein>
    <recommendedName>
        <fullName evidence="1">Multidrug resistance protein MdtK</fullName>
    </recommendedName>
    <alternativeName>
        <fullName evidence="1">Multidrug-efflux transporter</fullName>
    </alternativeName>
</protein>
<sequence length="457" mass="50035">MQKYLKEARSLLALGIPVIIAQFSQTAMGVVDTVMAGSVSATDMSAVAVGTSIWLPVILFGYGLLLALTPIIAQMNGSGRRNLIASQTQQGFWLAIFLSIIIIAILYNSKFLIDRQHNIDPILAEKAVGFIHAIMWGAPGYLFYQVLRNQCEGLSKTKPGMVISFLGLLINIPINYIFIYGKFGAPALGGVGCGVATASVYWVMFLLMRWYVKRASSQRDIRPKHRFAAPEWHILKRISALGLPIAMAVFFEITLFAIVALLISPLGVTAVAGHQIAQNFSSLMFMFPISLAAATTIRVGYNLGKKSIENARISAYTGIMVGLVFACLTATFSIILREPIALMYNDNPEVITMASHLMLFAALYQLSDAIQVVGAGVLRGYKDTRSIFYITFIAFWILGLPSGYILGLTDYIVPAMGPQGFWIGFIIGLTASAVMIFARISWTQKQPDEVILQHSTH</sequence>
<comment type="function">
    <text evidence="1">Multidrug efflux pump that functions probably as a Na(+)/drug antiporter.</text>
</comment>
<comment type="subcellular location">
    <subcellularLocation>
        <location evidence="1">Cell inner membrane</location>
        <topology evidence="1">Multi-pass membrane protein</topology>
    </subcellularLocation>
</comment>
<comment type="similarity">
    <text evidence="1">Belongs to the multi antimicrobial extrusion (MATE) (TC 2.A.66.1) family. MdtK subfamily.</text>
</comment>
<proteinExistence type="inferred from homology"/>
<gene>
    <name evidence="1" type="primary">mdtK</name>
    <name type="synonym">norM</name>
    <name type="ordered locus">plu2611</name>
</gene>
<reference key="1">
    <citation type="journal article" date="2003" name="Nat. Biotechnol.">
        <title>The genome sequence of the entomopathogenic bacterium Photorhabdus luminescens.</title>
        <authorList>
            <person name="Duchaud E."/>
            <person name="Rusniok C."/>
            <person name="Frangeul L."/>
            <person name="Buchrieser C."/>
            <person name="Givaudan A."/>
            <person name="Taourit S."/>
            <person name="Bocs S."/>
            <person name="Boursaux-Eude C."/>
            <person name="Chandler M."/>
            <person name="Charles J.-F."/>
            <person name="Dassa E."/>
            <person name="Derose R."/>
            <person name="Derzelle S."/>
            <person name="Freyssinet G."/>
            <person name="Gaudriault S."/>
            <person name="Medigue C."/>
            <person name="Lanois A."/>
            <person name="Powell K."/>
            <person name="Siguier P."/>
            <person name="Vincent R."/>
            <person name="Wingate V."/>
            <person name="Zouine M."/>
            <person name="Glaser P."/>
            <person name="Boemare N."/>
            <person name="Danchin A."/>
            <person name="Kunst F."/>
        </authorList>
    </citation>
    <scope>NUCLEOTIDE SEQUENCE [LARGE SCALE GENOMIC DNA]</scope>
    <source>
        <strain>DSM 15139 / CIP 105565 / TT01</strain>
    </source>
</reference>
<accession>Q7N3V2</accession>